<proteinExistence type="evidence at protein level"/>
<name>SPER_STRPU</name>
<comment type="function">
    <text>Receptor for the egg peptide speract.</text>
</comment>
<comment type="subcellular location">
    <subcellularLocation>
        <location>Membrane</location>
        <topology>Single-pass type I membrane protein</topology>
    </subcellularLocation>
</comment>
<organism>
    <name type="scientific">Strongylocentrotus purpuratus</name>
    <name type="common">Purple sea urchin</name>
    <dbReference type="NCBI Taxonomy" id="7668"/>
    <lineage>
        <taxon>Eukaryota</taxon>
        <taxon>Metazoa</taxon>
        <taxon>Echinodermata</taxon>
        <taxon>Eleutherozoa</taxon>
        <taxon>Echinozoa</taxon>
        <taxon>Echinoidea</taxon>
        <taxon>Euechinoidea</taxon>
        <taxon>Echinacea</taxon>
        <taxon>Camarodonta</taxon>
        <taxon>Echinidea</taxon>
        <taxon>Strongylocentrotidae</taxon>
        <taxon>Strongylocentrotus</taxon>
    </lineage>
</organism>
<accession>P16264</accession>
<protein>
    <recommendedName>
        <fullName>Egg peptide speract receptor</fullName>
    </recommendedName>
</protein>
<evidence type="ECO:0000255" key="1"/>
<evidence type="ECO:0000255" key="2">
    <source>
        <dbReference type="PROSITE-ProRule" id="PRU00196"/>
    </source>
</evidence>
<feature type="signal peptide">
    <location>
        <begin position="1"/>
        <end position="30"/>
    </location>
</feature>
<feature type="chain" id="PRO_0000033231" description="Egg peptide speract receptor">
    <location>
        <begin position="31"/>
        <end position="532"/>
    </location>
</feature>
<feature type="topological domain" description="Extracellular" evidence="1">
    <location>
        <begin position="31"/>
        <end position="491"/>
    </location>
</feature>
<feature type="transmembrane region" description="Helical" evidence="1">
    <location>
        <begin position="492"/>
        <end position="520"/>
    </location>
</feature>
<feature type="topological domain" description="Cytoplasmic" evidence="1">
    <location>
        <begin position="521"/>
        <end position="532"/>
    </location>
</feature>
<feature type="domain" description="SRCR 1" evidence="2">
    <location>
        <begin position="43"/>
        <end position="144"/>
    </location>
</feature>
<feature type="domain" description="SRCR 2" evidence="2">
    <location>
        <begin position="153"/>
        <end position="257"/>
    </location>
</feature>
<feature type="domain" description="SRCR 3" evidence="2">
    <location>
        <begin position="264"/>
        <end position="366"/>
    </location>
</feature>
<feature type="domain" description="SRCR 4" evidence="2">
    <location>
        <begin position="382"/>
        <end position="485"/>
    </location>
</feature>
<feature type="glycosylation site" description="N-linked (GlcNAc...) asparagine" evidence="1">
    <location>
        <position position="78"/>
    </location>
</feature>
<feature type="glycosylation site" description="N-linked (GlcNAc...) asparagine" evidence="1">
    <location>
        <position position="115"/>
    </location>
</feature>
<feature type="glycosylation site" description="N-linked (GlcNAc...) asparagine" evidence="1">
    <location>
        <position position="459"/>
    </location>
</feature>
<feature type="disulfide bond" evidence="2">
    <location>
        <begin position="68"/>
        <end position="133"/>
    </location>
</feature>
<feature type="disulfide bond" evidence="2">
    <location>
        <begin position="81"/>
        <end position="143"/>
    </location>
</feature>
<feature type="disulfide bond" evidence="2">
    <location>
        <begin position="112"/>
        <end position="122"/>
    </location>
</feature>
<feature type="disulfide bond" evidence="2">
    <location>
        <begin position="178"/>
        <end position="244"/>
    </location>
</feature>
<feature type="disulfide bond" evidence="2">
    <location>
        <begin position="191"/>
        <end position="256"/>
    </location>
</feature>
<feature type="disulfide bond" evidence="2">
    <location>
        <begin position="223"/>
        <end position="233"/>
    </location>
</feature>
<feature type="disulfide bond" evidence="2">
    <location>
        <begin position="289"/>
        <end position="355"/>
    </location>
</feature>
<feature type="disulfide bond" evidence="2">
    <location>
        <begin position="302"/>
        <end position="365"/>
    </location>
</feature>
<feature type="disulfide bond" evidence="2">
    <location>
        <begin position="335"/>
        <end position="345"/>
    </location>
</feature>
<feature type="disulfide bond" evidence="2">
    <location>
        <begin position="406"/>
        <end position="475"/>
    </location>
</feature>
<feature type="disulfide bond" evidence="2">
    <location>
        <begin position="419"/>
        <end position="484"/>
    </location>
</feature>
<feature type="disulfide bond" evidence="2">
    <location>
        <begin position="454"/>
        <end position="465"/>
    </location>
</feature>
<sequence length="532" mass="57820">MGLPMMLQQYCWAACLVICIAISSVDDVGAEQNYGREAVEGNIRLIHGRTENEGSVEIYHATRWGGVCDWWWHMENANVTCKQLGFPGARQFYRRAYFGAHVTTFWVYKMNCLGNETRLEDCYHRPYGRPWLCNAQWAAGVECLPKDEPQGSLRMILGDVPNEGTLETFWDGAWGSVCHTDFGTPDGNVACRQMGYSRGVKSIKTDGHFGFSTGPIILDAVDCEGTEAHITECNMPVTPYQHACPYTHNWDVGVVCKPNVEGDIRLMDGSGPHEGRVEIWHDDAWGTICDDGWDWADANVVCRQAGYRGAVKASGFKGEDFGFTWAPIHTSFVMCTGVEDRLIDCILRDGWTHSCYHVEDASVVCATDDDDTIEIEPKHTRVRIVGMGQGQGRVEVSLGNGWGRVCDPDWSDHEAKTVCYHAGYKWGASRAAGSAEVSAPFDLEAPFIIDGITCSGVENETLSQCQMKVSADMTCATGDVGVVCEGSTAPPSGMSIAVIGGAAGGGVAGLAVAAFAFYYIKFVKPAGGGGQA</sequence>
<reference key="1">
    <citation type="journal article" date="1989" name="Proc. Natl. Acad. Sci. U.S.A.">
        <title>Cloning of the mRNA for the protein that crosslinks to the egg peptide speract.</title>
        <authorList>
            <person name="Dangott L.J."/>
            <person name="Jordan J.E."/>
            <person name="Bellet R.A."/>
            <person name="Garbers D.L."/>
        </authorList>
    </citation>
    <scope>NUCLEOTIDE SEQUENCE [MRNA]</scope>
    <scope>PROTEIN SEQUENCE OF 477-489</scope>
</reference>
<keyword id="KW-0903">Direct protein sequencing</keyword>
<keyword id="KW-1015">Disulfide bond</keyword>
<keyword id="KW-0325">Glycoprotein</keyword>
<keyword id="KW-0472">Membrane</keyword>
<keyword id="KW-0675">Receptor</keyword>
<keyword id="KW-1185">Reference proteome</keyword>
<keyword id="KW-0677">Repeat</keyword>
<keyword id="KW-0732">Signal</keyword>
<keyword id="KW-0812">Transmembrane</keyword>
<keyword id="KW-1133">Transmembrane helix</keyword>
<dbReference type="EMBL" id="J04518">
    <property type="protein sequence ID" value="AAA30078.1"/>
    <property type="molecule type" value="mRNA"/>
</dbReference>
<dbReference type="PIR" id="A32751">
    <property type="entry name" value="A32751"/>
</dbReference>
<dbReference type="RefSeq" id="NP_999772.1">
    <property type="nucleotide sequence ID" value="NM_214607.1"/>
</dbReference>
<dbReference type="SMR" id="P16264"/>
<dbReference type="STRING" id="7668.P16264"/>
<dbReference type="EnsemblMetazoa" id="NM_214607">
    <property type="protein sequence ID" value="NP_999772"/>
    <property type="gene ID" value="LOC373458"/>
</dbReference>
<dbReference type="GeneID" id="373458"/>
<dbReference type="KEGG" id="spu:373458"/>
<dbReference type="HOGENOM" id="CLU_002555_11_0_1"/>
<dbReference type="InParanoid" id="P16264"/>
<dbReference type="OMA" id="EIEPKHT"/>
<dbReference type="OrthoDB" id="10078503at2759"/>
<dbReference type="PhylomeDB" id="P16264"/>
<dbReference type="Proteomes" id="UP000007110">
    <property type="component" value="Unassembled WGS sequence"/>
</dbReference>
<dbReference type="GO" id="GO:0016020">
    <property type="term" value="C:membrane"/>
    <property type="evidence" value="ECO:0007669"/>
    <property type="project" value="UniProtKB-SubCell"/>
</dbReference>
<dbReference type="FunFam" id="3.10.250.10:FF:000005">
    <property type="entry name" value="Neurotrypsin isoform A"/>
    <property type="match status" value="1"/>
</dbReference>
<dbReference type="FunFam" id="3.10.250.10:FF:000007">
    <property type="entry name" value="Soluble scavenger receptor cysteine-rich domain-containing protein SSC5D"/>
    <property type="match status" value="2"/>
</dbReference>
<dbReference type="Gene3D" id="3.10.250.10">
    <property type="entry name" value="SRCR-like domain"/>
    <property type="match status" value="4"/>
</dbReference>
<dbReference type="InterPro" id="IPR001190">
    <property type="entry name" value="SRCR"/>
</dbReference>
<dbReference type="InterPro" id="IPR036772">
    <property type="entry name" value="SRCR-like_dom_sf"/>
</dbReference>
<dbReference type="PANTHER" id="PTHR19331:SF465">
    <property type="entry name" value="EGG PEPTIDE SPERACT RECEPTOR"/>
    <property type="match status" value="1"/>
</dbReference>
<dbReference type="PANTHER" id="PTHR19331">
    <property type="entry name" value="SCAVENGER RECEPTOR DOMAIN-CONTAINING"/>
    <property type="match status" value="1"/>
</dbReference>
<dbReference type="Pfam" id="PF00530">
    <property type="entry name" value="SRCR"/>
    <property type="match status" value="4"/>
</dbReference>
<dbReference type="PRINTS" id="PR00258">
    <property type="entry name" value="SPERACTRCPTR"/>
</dbReference>
<dbReference type="SMART" id="SM00202">
    <property type="entry name" value="SR"/>
    <property type="match status" value="4"/>
</dbReference>
<dbReference type="SUPFAM" id="SSF56487">
    <property type="entry name" value="SRCR-like"/>
    <property type="match status" value="4"/>
</dbReference>
<dbReference type="PROSITE" id="PS00420">
    <property type="entry name" value="SRCR_1"/>
    <property type="match status" value="4"/>
</dbReference>
<dbReference type="PROSITE" id="PS50287">
    <property type="entry name" value="SRCR_2"/>
    <property type="match status" value="4"/>
</dbReference>